<accession>B0K437</accession>
<sequence>MKIVLASKSPRRRELLSNLGLDFEVIESNVEEFSSEKHPSRYVMDLSFNKAMSVAKKLKEEAIVIGADTIVVIEDKVLGKPKDRDEAFIMLKNLQGRVHTVYTGITIVRTKDFKYVSDFEETKVWIKKLEDEEIFNYIDTGEGYDKAGAYAIQGVGALIVEKIEGDYFNVVGLPISKLFDILKREFDVRLL</sequence>
<name>NTPPA_THEPX</name>
<dbReference type="EC" id="3.6.1.9" evidence="1"/>
<dbReference type="EMBL" id="CP000923">
    <property type="protein sequence ID" value="ABY93408.1"/>
    <property type="molecule type" value="Genomic_DNA"/>
</dbReference>
<dbReference type="RefSeq" id="WP_003866929.1">
    <property type="nucleotide sequence ID" value="NC_010320.1"/>
</dbReference>
<dbReference type="SMR" id="B0K437"/>
<dbReference type="KEGG" id="tex:Teth514_2136"/>
<dbReference type="HOGENOM" id="CLU_040416_0_0_9"/>
<dbReference type="Proteomes" id="UP000002155">
    <property type="component" value="Chromosome"/>
</dbReference>
<dbReference type="GO" id="GO:0005737">
    <property type="term" value="C:cytoplasm"/>
    <property type="evidence" value="ECO:0007669"/>
    <property type="project" value="UniProtKB-SubCell"/>
</dbReference>
<dbReference type="GO" id="GO:0036218">
    <property type="term" value="F:dTTP diphosphatase activity"/>
    <property type="evidence" value="ECO:0007669"/>
    <property type="project" value="RHEA"/>
</dbReference>
<dbReference type="GO" id="GO:0036221">
    <property type="term" value="F:UTP diphosphatase activity"/>
    <property type="evidence" value="ECO:0007669"/>
    <property type="project" value="RHEA"/>
</dbReference>
<dbReference type="GO" id="GO:0009117">
    <property type="term" value="P:nucleotide metabolic process"/>
    <property type="evidence" value="ECO:0007669"/>
    <property type="project" value="UniProtKB-KW"/>
</dbReference>
<dbReference type="CDD" id="cd00555">
    <property type="entry name" value="Maf"/>
    <property type="match status" value="1"/>
</dbReference>
<dbReference type="FunFam" id="3.90.950.10:FF:000005">
    <property type="entry name" value="7-methyl-GTP pyrophosphatase"/>
    <property type="match status" value="1"/>
</dbReference>
<dbReference type="Gene3D" id="3.90.950.10">
    <property type="match status" value="1"/>
</dbReference>
<dbReference type="HAMAP" id="MF_00528">
    <property type="entry name" value="Maf"/>
    <property type="match status" value="1"/>
</dbReference>
<dbReference type="InterPro" id="IPR029001">
    <property type="entry name" value="ITPase-like_fam"/>
</dbReference>
<dbReference type="InterPro" id="IPR003697">
    <property type="entry name" value="Maf-like"/>
</dbReference>
<dbReference type="NCBIfam" id="TIGR00172">
    <property type="entry name" value="maf"/>
    <property type="match status" value="1"/>
</dbReference>
<dbReference type="PANTHER" id="PTHR43213">
    <property type="entry name" value="BIFUNCTIONAL DTTP/UTP PYROPHOSPHATASE/METHYLTRANSFERASE PROTEIN-RELATED"/>
    <property type="match status" value="1"/>
</dbReference>
<dbReference type="PANTHER" id="PTHR43213:SF5">
    <property type="entry name" value="BIFUNCTIONAL DTTP_UTP PYROPHOSPHATASE_METHYLTRANSFERASE PROTEIN-RELATED"/>
    <property type="match status" value="1"/>
</dbReference>
<dbReference type="Pfam" id="PF02545">
    <property type="entry name" value="Maf"/>
    <property type="match status" value="1"/>
</dbReference>
<dbReference type="PIRSF" id="PIRSF006305">
    <property type="entry name" value="Maf"/>
    <property type="match status" value="1"/>
</dbReference>
<dbReference type="SUPFAM" id="SSF52972">
    <property type="entry name" value="ITPase-like"/>
    <property type="match status" value="1"/>
</dbReference>
<organism>
    <name type="scientific">Thermoanaerobacter sp. (strain X514)</name>
    <dbReference type="NCBI Taxonomy" id="399726"/>
    <lineage>
        <taxon>Bacteria</taxon>
        <taxon>Bacillati</taxon>
        <taxon>Bacillota</taxon>
        <taxon>Clostridia</taxon>
        <taxon>Thermoanaerobacterales</taxon>
        <taxon>Thermoanaerobacteraceae</taxon>
        <taxon>Thermoanaerobacter</taxon>
    </lineage>
</organism>
<gene>
    <name type="ordered locus">Teth514_2136</name>
</gene>
<proteinExistence type="inferred from homology"/>
<comment type="function">
    <text evidence="1">Nucleoside triphosphate pyrophosphatase that hydrolyzes dTTP and UTP. May have a dual role in cell division arrest and in preventing the incorporation of modified nucleotides into cellular nucleic acids.</text>
</comment>
<comment type="catalytic activity">
    <reaction evidence="1">
        <text>dTTP + H2O = dTMP + diphosphate + H(+)</text>
        <dbReference type="Rhea" id="RHEA:28534"/>
        <dbReference type="ChEBI" id="CHEBI:15377"/>
        <dbReference type="ChEBI" id="CHEBI:15378"/>
        <dbReference type="ChEBI" id="CHEBI:33019"/>
        <dbReference type="ChEBI" id="CHEBI:37568"/>
        <dbReference type="ChEBI" id="CHEBI:63528"/>
        <dbReference type="EC" id="3.6.1.9"/>
    </reaction>
</comment>
<comment type="catalytic activity">
    <reaction evidence="1">
        <text>UTP + H2O = UMP + diphosphate + H(+)</text>
        <dbReference type="Rhea" id="RHEA:29395"/>
        <dbReference type="ChEBI" id="CHEBI:15377"/>
        <dbReference type="ChEBI" id="CHEBI:15378"/>
        <dbReference type="ChEBI" id="CHEBI:33019"/>
        <dbReference type="ChEBI" id="CHEBI:46398"/>
        <dbReference type="ChEBI" id="CHEBI:57865"/>
        <dbReference type="EC" id="3.6.1.9"/>
    </reaction>
</comment>
<comment type="cofactor">
    <cofactor evidence="1">
        <name>a divalent metal cation</name>
        <dbReference type="ChEBI" id="CHEBI:60240"/>
    </cofactor>
</comment>
<comment type="subcellular location">
    <subcellularLocation>
        <location evidence="1">Cytoplasm</location>
    </subcellularLocation>
</comment>
<comment type="similarity">
    <text evidence="1">Belongs to the Maf family. YhdE subfamily.</text>
</comment>
<feature type="chain" id="PRO_1000127801" description="dTTP/UTP pyrophosphatase">
    <location>
        <begin position="1"/>
        <end position="191"/>
    </location>
</feature>
<feature type="active site" description="Proton acceptor" evidence="1">
    <location>
        <position position="68"/>
    </location>
</feature>
<feature type="site" description="Important for substrate specificity" evidence="1">
    <location>
        <position position="11"/>
    </location>
</feature>
<feature type="site" description="Important for substrate specificity" evidence="1">
    <location>
        <position position="69"/>
    </location>
</feature>
<feature type="site" description="Important for substrate specificity" evidence="1">
    <location>
        <position position="153"/>
    </location>
</feature>
<protein>
    <recommendedName>
        <fullName evidence="1">dTTP/UTP pyrophosphatase</fullName>
        <shortName evidence="1">dTTPase/UTPase</shortName>
        <ecNumber evidence="1">3.6.1.9</ecNumber>
    </recommendedName>
    <alternativeName>
        <fullName evidence="1">Nucleoside triphosphate pyrophosphatase</fullName>
    </alternativeName>
    <alternativeName>
        <fullName evidence="1">Nucleotide pyrophosphatase</fullName>
        <shortName evidence="1">Nucleotide PPase</shortName>
    </alternativeName>
</protein>
<keyword id="KW-0963">Cytoplasm</keyword>
<keyword id="KW-0378">Hydrolase</keyword>
<keyword id="KW-0546">Nucleotide metabolism</keyword>
<reference key="1">
    <citation type="submission" date="2008-01" db="EMBL/GenBank/DDBJ databases">
        <title>Complete sequence of Thermoanaerobacter sp. X514.</title>
        <authorList>
            <consortium name="US DOE Joint Genome Institute"/>
            <person name="Copeland A."/>
            <person name="Lucas S."/>
            <person name="Lapidus A."/>
            <person name="Barry K."/>
            <person name="Glavina del Rio T."/>
            <person name="Dalin E."/>
            <person name="Tice H."/>
            <person name="Pitluck S."/>
            <person name="Bruce D."/>
            <person name="Goodwin L."/>
            <person name="Saunders E."/>
            <person name="Brettin T."/>
            <person name="Detter J.C."/>
            <person name="Han C."/>
            <person name="Schmutz J."/>
            <person name="Larimer F."/>
            <person name="Land M."/>
            <person name="Hauser L."/>
            <person name="Kyrpides N."/>
            <person name="Kim E."/>
            <person name="Hemme C."/>
            <person name="Fields M.W."/>
            <person name="He Z."/>
            <person name="Zhou J."/>
            <person name="Richardson P."/>
        </authorList>
    </citation>
    <scope>NUCLEOTIDE SEQUENCE [LARGE SCALE GENOMIC DNA]</scope>
    <source>
        <strain>X514</strain>
    </source>
</reference>
<evidence type="ECO:0000255" key="1">
    <source>
        <dbReference type="HAMAP-Rule" id="MF_00528"/>
    </source>
</evidence>